<sequence>MVKVVATNKKAYTDYEILETYEAGIVLTGTEVKSLRNGSVNFKDSFCRFKNGELYLLNLHIPPYSHGGVYNHDPERPRKLLLHKRELKRLMGKVQEEGVTIVPLKIYFNDRGIAKVEIAVARGKKKYDKREAIKKREMERKIREYMKYSR</sequence>
<reference key="1">
    <citation type="journal article" date="1999" name="Nature">
        <title>Evidence for lateral gene transfer between Archaea and Bacteria from genome sequence of Thermotoga maritima.</title>
        <authorList>
            <person name="Nelson K.E."/>
            <person name="Clayton R.A."/>
            <person name="Gill S.R."/>
            <person name="Gwinn M.L."/>
            <person name="Dodson R.J."/>
            <person name="Haft D.H."/>
            <person name="Hickey E.K."/>
            <person name="Peterson J.D."/>
            <person name="Nelson W.C."/>
            <person name="Ketchum K.A."/>
            <person name="McDonald L.A."/>
            <person name="Utterback T.R."/>
            <person name="Malek J.A."/>
            <person name="Linher K.D."/>
            <person name="Garrett M.M."/>
            <person name="Stewart A.M."/>
            <person name="Cotton M.D."/>
            <person name="Pratt M.S."/>
            <person name="Phillips C.A."/>
            <person name="Richardson D.L."/>
            <person name="Heidelberg J.F."/>
            <person name="Sutton G.G."/>
            <person name="Fleischmann R.D."/>
            <person name="Eisen J.A."/>
            <person name="White O."/>
            <person name="Salzberg S.L."/>
            <person name="Smith H.O."/>
            <person name="Venter J.C."/>
            <person name="Fraser C.M."/>
        </authorList>
    </citation>
    <scope>NUCLEOTIDE SEQUENCE [LARGE SCALE GENOMIC DNA]</scope>
    <source>
        <strain>ATCC 43589 / DSM 3109 / JCM 10099 / NBRC 100826 / MSB8</strain>
    </source>
</reference>
<evidence type="ECO:0000255" key="1">
    <source>
        <dbReference type="HAMAP-Rule" id="MF_00023"/>
    </source>
</evidence>
<evidence type="ECO:0000305" key="2"/>
<evidence type="ECO:0007829" key="3">
    <source>
        <dbReference type="PDB" id="7LJP"/>
    </source>
</evidence>
<feature type="chain" id="PRO_0000103054" description="SsrA-binding protein">
    <location>
        <begin position="1"/>
        <end position="150"/>
    </location>
</feature>
<feature type="strand" evidence="3">
    <location>
        <begin position="1"/>
        <end position="7"/>
    </location>
</feature>
<feature type="helix" evidence="3">
    <location>
        <begin position="9"/>
        <end position="14"/>
    </location>
</feature>
<feature type="strand" evidence="3">
    <location>
        <begin position="15"/>
        <end position="25"/>
    </location>
</feature>
<feature type="helix" evidence="3">
    <location>
        <begin position="29"/>
        <end position="36"/>
    </location>
</feature>
<feature type="strand" evidence="3">
    <location>
        <begin position="46"/>
        <end position="50"/>
    </location>
</feature>
<feature type="strand" evidence="3">
    <location>
        <begin position="53"/>
        <end position="58"/>
    </location>
</feature>
<feature type="helix" evidence="3">
    <location>
        <begin position="68"/>
        <end position="70"/>
    </location>
</feature>
<feature type="strand" evidence="3">
    <location>
        <begin position="78"/>
        <end position="81"/>
    </location>
</feature>
<feature type="helix" evidence="3">
    <location>
        <begin position="84"/>
        <end position="93"/>
    </location>
</feature>
<feature type="strand" evidence="3">
    <location>
        <begin position="99"/>
        <end position="108"/>
    </location>
</feature>
<feature type="strand" evidence="3">
    <location>
        <begin position="114"/>
        <end position="123"/>
    </location>
</feature>
<feature type="helix" evidence="3">
    <location>
        <begin position="126"/>
        <end position="141"/>
    </location>
</feature>
<name>SSRP_THEMA</name>
<accession>P56944</accession>
<keyword id="KW-0002">3D-structure</keyword>
<keyword id="KW-0963">Cytoplasm</keyword>
<keyword id="KW-1185">Reference proteome</keyword>
<keyword id="KW-0694">RNA-binding</keyword>
<comment type="function">
    <text evidence="1">Required for rescue of stalled ribosomes mediated by trans-translation. Binds to transfer-messenger RNA (tmRNA), required for stable association of tmRNA with ribosomes. tmRNA and SmpB together mimic tRNA shape, replacing the anticodon stem-loop with SmpB. tmRNA is encoded by the ssrA gene; the 2 termini fold to resemble tRNA(Ala) and it encodes a 'tag peptide', a short internal open reading frame. During trans-translation Ala-aminoacylated tmRNA acts like a tRNA, entering the A-site of stalled ribosomes, displacing the stalled mRNA. The ribosome then switches to translate the ORF on the tmRNA; the nascent peptide is terminated with the 'tag peptide' encoded by the tmRNA and targeted for degradation. The ribosome is freed to recommence translation, which seems to be the essential function of trans-translation.</text>
</comment>
<comment type="subcellular location">
    <subcellularLocation>
        <location evidence="1">Cytoplasm</location>
    </subcellularLocation>
    <text evidence="1">The tmRNA-SmpB complex associates with stalled 70S ribosomes.</text>
</comment>
<comment type="similarity">
    <text evidence="1">Belongs to the SmpB family.</text>
</comment>
<comment type="sequence caution" evidence="2">
    <conflict type="frameshift">
        <sequence resource="EMBL" id="AE000512"/>
    </conflict>
</comment>
<organism>
    <name type="scientific">Thermotoga maritima (strain ATCC 43589 / DSM 3109 / JCM 10099 / NBRC 100826 / MSB8)</name>
    <dbReference type="NCBI Taxonomy" id="243274"/>
    <lineage>
        <taxon>Bacteria</taxon>
        <taxon>Thermotogati</taxon>
        <taxon>Thermotogota</taxon>
        <taxon>Thermotogae</taxon>
        <taxon>Thermotogales</taxon>
        <taxon>Thermotogaceae</taxon>
        <taxon>Thermotoga</taxon>
    </lineage>
</organism>
<dbReference type="EMBL" id="AE000512">
    <property type="status" value="NOT_ANNOTATED_CDS"/>
    <property type="molecule type" value="Genomic_DNA"/>
</dbReference>
<dbReference type="RefSeq" id="WP_011943280.1">
    <property type="nucleotide sequence ID" value="NZ_CP011107.1"/>
</dbReference>
<dbReference type="PDB" id="7LJP">
    <property type="method" value="X-ray"/>
    <property type="resolution" value="2.10 A"/>
    <property type="chains" value="A/B/C=1-150"/>
</dbReference>
<dbReference type="PDBsum" id="7LJP"/>
<dbReference type="SMR" id="P56944"/>
<dbReference type="FunCoup" id="P56944">
    <property type="interactions" value="279"/>
</dbReference>
<dbReference type="PaxDb" id="243274-THEMA_03455"/>
<dbReference type="KEGG" id="tmw:THMA_0261"/>
<dbReference type="PATRIC" id="fig|243274.19.peg.251"/>
<dbReference type="eggNOG" id="COG0691">
    <property type="taxonomic scope" value="Bacteria"/>
</dbReference>
<dbReference type="InParanoid" id="P56944"/>
<dbReference type="Proteomes" id="UP000008183">
    <property type="component" value="Chromosome"/>
</dbReference>
<dbReference type="GO" id="GO:0005829">
    <property type="term" value="C:cytosol"/>
    <property type="evidence" value="ECO:0000318"/>
    <property type="project" value="GO_Central"/>
</dbReference>
<dbReference type="GO" id="GO:0003723">
    <property type="term" value="F:RNA binding"/>
    <property type="evidence" value="ECO:0000318"/>
    <property type="project" value="GO_Central"/>
</dbReference>
<dbReference type="GO" id="GO:0070929">
    <property type="term" value="P:trans-translation"/>
    <property type="evidence" value="ECO:0007669"/>
    <property type="project" value="UniProtKB-UniRule"/>
</dbReference>
<dbReference type="CDD" id="cd09294">
    <property type="entry name" value="SmpB"/>
    <property type="match status" value="1"/>
</dbReference>
<dbReference type="Gene3D" id="2.40.280.10">
    <property type="match status" value="1"/>
</dbReference>
<dbReference type="HAMAP" id="MF_00023">
    <property type="entry name" value="SmpB"/>
    <property type="match status" value="1"/>
</dbReference>
<dbReference type="InterPro" id="IPR023620">
    <property type="entry name" value="SmpB"/>
</dbReference>
<dbReference type="InterPro" id="IPR000037">
    <property type="entry name" value="SsrA-bd_prot"/>
</dbReference>
<dbReference type="InterPro" id="IPR020081">
    <property type="entry name" value="SsrA-bd_prot_CS"/>
</dbReference>
<dbReference type="NCBIfam" id="NF003843">
    <property type="entry name" value="PRK05422.1"/>
    <property type="match status" value="1"/>
</dbReference>
<dbReference type="NCBIfam" id="TIGR00086">
    <property type="entry name" value="smpB"/>
    <property type="match status" value="1"/>
</dbReference>
<dbReference type="PANTHER" id="PTHR30308:SF2">
    <property type="entry name" value="SSRA-BINDING PROTEIN"/>
    <property type="match status" value="1"/>
</dbReference>
<dbReference type="PANTHER" id="PTHR30308">
    <property type="entry name" value="TMRNA-BINDING COMPONENT OF TRANS-TRANSLATION TAGGING COMPLEX"/>
    <property type="match status" value="1"/>
</dbReference>
<dbReference type="Pfam" id="PF01668">
    <property type="entry name" value="SmpB"/>
    <property type="match status" value="1"/>
</dbReference>
<dbReference type="SUPFAM" id="SSF74982">
    <property type="entry name" value="Small protein B (SmpB)"/>
    <property type="match status" value="1"/>
</dbReference>
<dbReference type="PROSITE" id="PS01317">
    <property type="entry name" value="SSRP"/>
    <property type="match status" value="1"/>
</dbReference>
<gene>
    <name evidence="1" type="primary">smpB</name>
    <name type="ordered locus">TM_0254</name>
</gene>
<protein>
    <recommendedName>
        <fullName evidence="1">SsrA-binding protein</fullName>
    </recommendedName>
    <alternativeName>
        <fullName evidence="1">Small protein B</fullName>
    </alternativeName>
</protein>
<proteinExistence type="evidence at protein level"/>